<accession>Q7SYK0</accession>
<name>CHID1_DANRE</name>
<protein>
    <recommendedName>
        <fullName>Chitinase domain-containing protein 1</fullName>
    </recommendedName>
</protein>
<dbReference type="EMBL" id="BC054696">
    <property type="protein sequence ID" value="AAH54696.1"/>
    <property type="molecule type" value="mRNA"/>
</dbReference>
<dbReference type="RefSeq" id="NP_956351.1">
    <property type="nucleotide sequence ID" value="NM_200057.1"/>
</dbReference>
<dbReference type="SMR" id="Q7SYK0"/>
<dbReference type="FunCoup" id="Q7SYK0">
    <property type="interactions" value="969"/>
</dbReference>
<dbReference type="STRING" id="7955.ENSDARP00000129029"/>
<dbReference type="PaxDb" id="7955-ENSDARP00000129029"/>
<dbReference type="GeneID" id="337225"/>
<dbReference type="KEGG" id="dre:337225"/>
<dbReference type="AGR" id="ZFIN:ZDB-GENE-030131-9169"/>
<dbReference type="CTD" id="66005"/>
<dbReference type="ZFIN" id="ZDB-GENE-030131-9169">
    <property type="gene designation" value="chid1"/>
</dbReference>
<dbReference type="eggNOG" id="KOG2091">
    <property type="taxonomic scope" value="Eukaryota"/>
</dbReference>
<dbReference type="InParanoid" id="Q7SYK0"/>
<dbReference type="OrthoDB" id="10254444at2759"/>
<dbReference type="PhylomeDB" id="Q7SYK0"/>
<dbReference type="Reactome" id="R-DRE-114608">
    <property type="pathway name" value="Platelet degranulation"/>
</dbReference>
<dbReference type="PRO" id="PR:Q7SYK0"/>
<dbReference type="Proteomes" id="UP000000437">
    <property type="component" value="Chromosome 25"/>
</dbReference>
<dbReference type="GO" id="GO:0012505">
    <property type="term" value="C:endomembrane system"/>
    <property type="evidence" value="ECO:0000318"/>
    <property type="project" value="GO_Central"/>
</dbReference>
<dbReference type="GO" id="GO:0005576">
    <property type="term" value="C:extracellular region"/>
    <property type="evidence" value="ECO:0007669"/>
    <property type="project" value="UniProtKB-SubCell"/>
</dbReference>
<dbReference type="GO" id="GO:0005764">
    <property type="term" value="C:lysosome"/>
    <property type="evidence" value="ECO:0007669"/>
    <property type="project" value="UniProtKB-SubCell"/>
</dbReference>
<dbReference type="GO" id="GO:0008061">
    <property type="term" value="F:chitin binding"/>
    <property type="evidence" value="ECO:0007669"/>
    <property type="project" value="InterPro"/>
</dbReference>
<dbReference type="GO" id="GO:0070492">
    <property type="term" value="F:oligosaccharide binding"/>
    <property type="evidence" value="ECO:0000318"/>
    <property type="project" value="GO_Central"/>
</dbReference>
<dbReference type="GO" id="GO:0005975">
    <property type="term" value="P:carbohydrate metabolic process"/>
    <property type="evidence" value="ECO:0007669"/>
    <property type="project" value="InterPro"/>
</dbReference>
<dbReference type="CDD" id="cd02876">
    <property type="entry name" value="GH18_SI-CLP"/>
    <property type="match status" value="1"/>
</dbReference>
<dbReference type="FunFam" id="3.10.50.10:FF:000002">
    <property type="entry name" value="Chitinase domain-containing protein 1"/>
    <property type="match status" value="1"/>
</dbReference>
<dbReference type="FunFam" id="3.20.20.80:FF:000028">
    <property type="entry name" value="Chitinase domain-containing protein 1"/>
    <property type="match status" value="1"/>
</dbReference>
<dbReference type="Gene3D" id="3.10.50.10">
    <property type="match status" value="1"/>
</dbReference>
<dbReference type="Gene3D" id="1.10.8.360">
    <property type="entry name" value="3,6-anhydro-alpha-l-galactosidase"/>
    <property type="match status" value="1"/>
</dbReference>
<dbReference type="Gene3D" id="3.20.20.80">
    <property type="entry name" value="Glycosidases"/>
    <property type="match status" value="1"/>
</dbReference>
<dbReference type="InterPro" id="IPR011583">
    <property type="entry name" value="Chitinase_II/V-like_cat"/>
</dbReference>
<dbReference type="InterPro" id="IPR029070">
    <property type="entry name" value="Chitinase_insertion_sf"/>
</dbReference>
<dbReference type="InterPro" id="IPR001223">
    <property type="entry name" value="Glyco_hydro18_cat"/>
</dbReference>
<dbReference type="InterPro" id="IPR017853">
    <property type="entry name" value="Glycoside_hydrolase_SF"/>
</dbReference>
<dbReference type="PANTHER" id="PTHR46066:SF2">
    <property type="entry name" value="CHITINASE DOMAIN-CONTAINING PROTEIN 1"/>
    <property type="match status" value="1"/>
</dbReference>
<dbReference type="PANTHER" id="PTHR46066">
    <property type="entry name" value="CHITINASE DOMAIN-CONTAINING PROTEIN 1 FAMILY MEMBER"/>
    <property type="match status" value="1"/>
</dbReference>
<dbReference type="Pfam" id="PF00704">
    <property type="entry name" value="Glyco_hydro_18"/>
    <property type="match status" value="1"/>
</dbReference>
<dbReference type="SMART" id="SM00636">
    <property type="entry name" value="Glyco_18"/>
    <property type="match status" value="1"/>
</dbReference>
<dbReference type="SUPFAM" id="SSF51445">
    <property type="entry name" value="(Trans)glycosidases"/>
    <property type="match status" value="1"/>
</dbReference>
<dbReference type="PROSITE" id="PS51910">
    <property type="entry name" value="GH18_2"/>
    <property type="match status" value="1"/>
</dbReference>
<sequence>MRADWTFLLVCLLLPVVRSTLSKTDAKKASKVQEAESSVAERPAQDRGLVVTDPQWRDIVREEKRFCHQCINTRQFKGAVLGYITPWNSHGYDIAKLFGPKLTSVSPVWLQLRRRGPESFHITGLHDHDPGWVKAVRKANKKNKILPRLLFDGWSYQDYVSVLDSEDEMEELGREALEVAKAEGFDGYTLELWSQLGGNKRKELVHLVTHLCETLNAGKLTCVLVIPPSVAPGTGQPGMFGRDDFEKLAPVVDAFSLMTYDYSGPGRPGPSAPLPWVRECVLQLAPENQWRHKILLGVNMYGLDFSSHGGAEPLLGARCIELLKEVKPKLQWDENTGEHFFNYKRNNGVKHVVYYPTLKFLQLRISLAAELGTGISMWELGQGLDYFYDLL</sequence>
<keyword id="KW-0458">Lysosome</keyword>
<keyword id="KW-1185">Reference proteome</keyword>
<keyword id="KW-0964">Secreted</keyword>
<keyword id="KW-0732">Signal</keyword>
<reference key="1">
    <citation type="submission" date="2003-07" db="EMBL/GenBank/DDBJ databases">
        <authorList>
            <consortium name="NIH - Zebrafish Gene Collection (ZGC) project"/>
        </authorList>
    </citation>
    <scope>NUCLEOTIDE SEQUENCE [LARGE SCALE MRNA]</scope>
    <source>
        <strain>SJD</strain>
    </source>
</reference>
<feature type="signal peptide" evidence="2">
    <location>
        <begin position="1"/>
        <end position="19"/>
    </location>
</feature>
<feature type="chain" id="PRO_0000280612" description="Chitinase domain-containing protein 1">
    <location>
        <begin position="20"/>
        <end position="391"/>
    </location>
</feature>
<feature type="domain" description="GH18" evidence="3">
    <location>
        <begin position="78"/>
        <end position="391"/>
    </location>
</feature>
<feature type="region of interest" description="Disordered" evidence="4">
    <location>
        <begin position="27"/>
        <end position="46"/>
    </location>
</feature>
<gene>
    <name type="primary">chid1</name>
    <name type="ORF">zgc:66396</name>
</gene>
<evidence type="ECO:0000250" key="1"/>
<evidence type="ECO:0000255" key="2"/>
<evidence type="ECO:0000255" key="3">
    <source>
        <dbReference type="PROSITE-ProRule" id="PRU01258"/>
    </source>
</evidence>
<evidence type="ECO:0000256" key="4">
    <source>
        <dbReference type="SAM" id="MobiDB-lite"/>
    </source>
</evidence>
<evidence type="ECO:0000305" key="5"/>
<proteinExistence type="evidence at transcript level"/>
<comment type="subcellular location">
    <subcellularLocation>
        <location>Secreted</location>
    </subcellularLocation>
    <subcellularLocation>
        <location evidence="1">Lysosome</location>
    </subcellularLocation>
</comment>
<comment type="similarity">
    <text evidence="5">Belongs to the glycosyl hydrolase 18 family.</text>
</comment>
<organism>
    <name type="scientific">Danio rerio</name>
    <name type="common">Zebrafish</name>
    <name type="synonym">Brachydanio rerio</name>
    <dbReference type="NCBI Taxonomy" id="7955"/>
    <lineage>
        <taxon>Eukaryota</taxon>
        <taxon>Metazoa</taxon>
        <taxon>Chordata</taxon>
        <taxon>Craniata</taxon>
        <taxon>Vertebrata</taxon>
        <taxon>Euteleostomi</taxon>
        <taxon>Actinopterygii</taxon>
        <taxon>Neopterygii</taxon>
        <taxon>Teleostei</taxon>
        <taxon>Ostariophysi</taxon>
        <taxon>Cypriniformes</taxon>
        <taxon>Danionidae</taxon>
        <taxon>Danioninae</taxon>
        <taxon>Danio</taxon>
    </lineage>
</organism>